<dbReference type="EMBL" id="CP000699">
    <property type="protein sequence ID" value="ABQ67718.1"/>
    <property type="status" value="ALT_INIT"/>
    <property type="molecule type" value="Genomic_DNA"/>
</dbReference>
<dbReference type="SMR" id="A5V602"/>
<dbReference type="STRING" id="392499.Swit_1353"/>
<dbReference type="PaxDb" id="392499-Swit_1353"/>
<dbReference type="KEGG" id="swi:Swit_1353"/>
<dbReference type="eggNOG" id="COG0087">
    <property type="taxonomic scope" value="Bacteria"/>
</dbReference>
<dbReference type="HOGENOM" id="CLU_044142_3_1_5"/>
<dbReference type="OrthoDB" id="9806135at2"/>
<dbReference type="Proteomes" id="UP000001989">
    <property type="component" value="Chromosome"/>
</dbReference>
<dbReference type="GO" id="GO:0022625">
    <property type="term" value="C:cytosolic large ribosomal subunit"/>
    <property type="evidence" value="ECO:0007669"/>
    <property type="project" value="TreeGrafter"/>
</dbReference>
<dbReference type="GO" id="GO:0019843">
    <property type="term" value="F:rRNA binding"/>
    <property type="evidence" value="ECO:0007669"/>
    <property type="project" value="UniProtKB-UniRule"/>
</dbReference>
<dbReference type="GO" id="GO:0003735">
    <property type="term" value="F:structural constituent of ribosome"/>
    <property type="evidence" value="ECO:0007669"/>
    <property type="project" value="InterPro"/>
</dbReference>
<dbReference type="GO" id="GO:0006412">
    <property type="term" value="P:translation"/>
    <property type="evidence" value="ECO:0007669"/>
    <property type="project" value="UniProtKB-UniRule"/>
</dbReference>
<dbReference type="FunFam" id="2.40.30.10:FF:000004">
    <property type="entry name" value="50S ribosomal protein L3"/>
    <property type="match status" value="1"/>
</dbReference>
<dbReference type="FunFam" id="3.30.160.810:FF:000001">
    <property type="entry name" value="50S ribosomal protein L3"/>
    <property type="match status" value="1"/>
</dbReference>
<dbReference type="Gene3D" id="3.30.160.810">
    <property type="match status" value="1"/>
</dbReference>
<dbReference type="Gene3D" id="2.40.30.10">
    <property type="entry name" value="Translation factors"/>
    <property type="match status" value="1"/>
</dbReference>
<dbReference type="HAMAP" id="MF_01325_B">
    <property type="entry name" value="Ribosomal_uL3_B"/>
    <property type="match status" value="1"/>
</dbReference>
<dbReference type="InterPro" id="IPR000597">
    <property type="entry name" value="Ribosomal_uL3"/>
</dbReference>
<dbReference type="InterPro" id="IPR019927">
    <property type="entry name" value="Ribosomal_uL3_bac/org-type"/>
</dbReference>
<dbReference type="InterPro" id="IPR009000">
    <property type="entry name" value="Transl_B-barrel_sf"/>
</dbReference>
<dbReference type="NCBIfam" id="TIGR03625">
    <property type="entry name" value="L3_bact"/>
    <property type="match status" value="1"/>
</dbReference>
<dbReference type="PANTHER" id="PTHR11229">
    <property type="entry name" value="50S RIBOSOMAL PROTEIN L3"/>
    <property type="match status" value="1"/>
</dbReference>
<dbReference type="PANTHER" id="PTHR11229:SF16">
    <property type="entry name" value="LARGE RIBOSOMAL SUBUNIT PROTEIN UL3C"/>
    <property type="match status" value="1"/>
</dbReference>
<dbReference type="Pfam" id="PF00297">
    <property type="entry name" value="Ribosomal_L3"/>
    <property type="match status" value="1"/>
</dbReference>
<dbReference type="SUPFAM" id="SSF50447">
    <property type="entry name" value="Translation proteins"/>
    <property type="match status" value="1"/>
</dbReference>
<organism>
    <name type="scientific">Rhizorhabdus wittichii (strain DSM 6014 / CCUG 31198 / JCM 15750 / NBRC 105917 / EY 4224 / RW1)</name>
    <name type="common">Sphingomonas wittichii</name>
    <dbReference type="NCBI Taxonomy" id="392499"/>
    <lineage>
        <taxon>Bacteria</taxon>
        <taxon>Pseudomonadati</taxon>
        <taxon>Pseudomonadota</taxon>
        <taxon>Alphaproteobacteria</taxon>
        <taxon>Sphingomonadales</taxon>
        <taxon>Sphingomonadaceae</taxon>
        <taxon>Rhizorhabdus</taxon>
    </lineage>
</organism>
<keyword id="KW-0488">Methylation</keyword>
<keyword id="KW-1185">Reference proteome</keyword>
<keyword id="KW-0687">Ribonucleoprotein</keyword>
<keyword id="KW-0689">Ribosomal protein</keyword>
<keyword id="KW-0694">RNA-binding</keyword>
<keyword id="KW-0699">rRNA-binding</keyword>
<reference key="1">
    <citation type="journal article" date="2010" name="J. Bacteriol.">
        <title>Genome sequence of the dioxin-mineralizing bacterium Sphingomonas wittichii RW1.</title>
        <authorList>
            <person name="Miller T.R."/>
            <person name="Delcher A.L."/>
            <person name="Salzberg S.L."/>
            <person name="Saunders E."/>
            <person name="Detter J.C."/>
            <person name="Halden R.U."/>
        </authorList>
    </citation>
    <scope>NUCLEOTIDE SEQUENCE [LARGE SCALE GENOMIC DNA]</scope>
    <source>
        <strain>DSM 6014 / CCUG 31198 / JCM 15750 / NBRC 105917 / EY 4224 / RW1</strain>
    </source>
</reference>
<name>RL3_RHIWR</name>
<evidence type="ECO:0000255" key="1">
    <source>
        <dbReference type="HAMAP-Rule" id="MF_01325"/>
    </source>
</evidence>
<evidence type="ECO:0000256" key="2">
    <source>
        <dbReference type="SAM" id="MobiDB-lite"/>
    </source>
</evidence>
<evidence type="ECO:0000305" key="3"/>
<protein>
    <recommendedName>
        <fullName evidence="1">Large ribosomal subunit protein uL3</fullName>
    </recommendedName>
    <alternativeName>
        <fullName evidence="3">50S ribosomal protein L3</fullName>
    </alternativeName>
</protein>
<sequence length="251" mass="26631">MRTGVIAKKMGMTRLFQEDGRHVPVTVLALENVQVVARREQDRDGYVAVQLGAGSAKPKNLTKPERGHFGKAEVEPKAFVAEFRVSEDGLLDVGAEISADHYVAGQFVDIQGSTQGKGFAGGMKRWGFGGLRATHGVSVSHRSLGSTGQRQDPGKVFKNKKMAGHMGDKNRTQQNLEIVQTDAERGLLFVKGSVPGSKGGWLLVKDSVKIAAPKDAPFPAGLKSAANSNSAPTETPAEEVAAPEATEGQEG</sequence>
<comment type="function">
    <text evidence="1">One of the primary rRNA binding proteins, it binds directly near the 3'-end of the 23S rRNA, where it nucleates assembly of the 50S subunit.</text>
</comment>
<comment type="subunit">
    <text evidence="1">Part of the 50S ribosomal subunit. Forms a cluster with proteins L14 and L19.</text>
</comment>
<comment type="PTM">
    <text evidence="1">Methylated by PrmB.</text>
</comment>
<comment type="similarity">
    <text evidence="1">Belongs to the universal ribosomal protein uL3 family.</text>
</comment>
<comment type="sequence caution" evidence="3">
    <conflict type="erroneous initiation">
        <sequence resource="EMBL-CDS" id="ABQ67718"/>
    </conflict>
</comment>
<gene>
    <name evidence="1" type="primary">rplC</name>
    <name type="ordered locus">Swit_1353</name>
</gene>
<feature type="chain" id="PRO_0000353616" description="Large ribosomal subunit protein uL3">
    <location>
        <begin position="1"/>
        <end position="251"/>
    </location>
</feature>
<feature type="region of interest" description="Disordered" evidence="2">
    <location>
        <begin position="214"/>
        <end position="251"/>
    </location>
</feature>
<feature type="compositionally biased region" description="Low complexity" evidence="2">
    <location>
        <begin position="231"/>
        <end position="251"/>
    </location>
</feature>
<feature type="modified residue" description="N5-methylglutamine" evidence="1">
    <location>
        <position position="151"/>
    </location>
</feature>
<proteinExistence type="inferred from homology"/>
<accession>A5V602</accession>